<proteinExistence type="inferred from homology"/>
<reference key="1">
    <citation type="journal article" date="2005" name="Nucleic Acids Res.">
        <title>Genome dynamics and diversity of Shigella species, the etiologic agents of bacillary dysentery.</title>
        <authorList>
            <person name="Yang F."/>
            <person name="Yang J."/>
            <person name="Zhang X."/>
            <person name="Chen L."/>
            <person name="Jiang Y."/>
            <person name="Yan Y."/>
            <person name="Tang X."/>
            <person name="Wang J."/>
            <person name="Xiong Z."/>
            <person name="Dong J."/>
            <person name="Xue Y."/>
            <person name="Zhu Y."/>
            <person name="Xu X."/>
            <person name="Sun L."/>
            <person name="Chen S."/>
            <person name="Nie H."/>
            <person name="Peng J."/>
            <person name="Xu J."/>
            <person name="Wang Y."/>
            <person name="Yuan Z."/>
            <person name="Wen Y."/>
            <person name="Yao Z."/>
            <person name="Shen Y."/>
            <person name="Qiang B."/>
            <person name="Hou Y."/>
            <person name="Yu J."/>
            <person name="Jin Q."/>
        </authorList>
    </citation>
    <scope>NUCLEOTIDE SEQUENCE [LARGE SCALE GENOMIC DNA]</scope>
    <source>
        <strain>Ss046</strain>
    </source>
</reference>
<protein>
    <recommendedName>
        <fullName evidence="1">UDP-3-O-acyl-N-acetylglucosamine deacetylase</fullName>
        <shortName evidence="1">UDP-3-O-acyl-GlcNAc deacetylase</shortName>
        <ecNumber evidence="1">3.5.1.108</ecNumber>
    </recommendedName>
    <alternativeName>
        <fullName evidence="1">UDP-3-O-[R-3-hydroxymyristoyl]-N-acetylglucosamine deacetylase</fullName>
    </alternativeName>
</protein>
<comment type="function">
    <text evidence="1">Catalyzes the hydrolysis of UDP-3-O-myristoyl-N-acetylglucosamine to form UDP-3-O-myristoylglucosamine and acetate, the committed step in lipid A biosynthesis.</text>
</comment>
<comment type="catalytic activity">
    <reaction evidence="1">
        <text>a UDP-3-O-[(3R)-3-hydroxyacyl]-N-acetyl-alpha-D-glucosamine + H2O = a UDP-3-O-[(3R)-3-hydroxyacyl]-alpha-D-glucosamine + acetate</text>
        <dbReference type="Rhea" id="RHEA:67816"/>
        <dbReference type="ChEBI" id="CHEBI:15377"/>
        <dbReference type="ChEBI" id="CHEBI:30089"/>
        <dbReference type="ChEBI" id="CHEBI:137740"/>
        <dbReference type="ChEBI" id="CHEBI:173225"/>
        <dbReference type="EC" id="3.5.1.108"/>
    </reaction>
</comment>
<comment type="cofactor">
    <cofactor evidence="1">
        <name>Zn(2+)</name>
        <dbReference type="ChEBI" id="CHEBI:29105"/>
    </cofactor>
</comment>
<comment type="pathway">
    <text evidence="1">Glycolipid biosynthesis; lipid IV(A) biosynthesis; lipid IV(A) from (3R)-3-hydroxytetradecanoyl-[acyl-carrier-protein] and UDP-N-acetyl-alpha-D-glucosamine: step 2/6.</text>
</comment>
<comment type="similarity">
    <text evidence="1">Belongs to the LpxC family.</text>
</comment>
<evidence type="ECO:0000255" key="1">
    <source>
        <dbReference type="HAMAP-Rule" id="MF_00388"/>
    </source>
</evidence>
<dbReference type="EC" id="3.5.1.108" evidence="1"/>
<dbReference type="EMBL" id="CP000038">
    <property type="protein sequence ID" value="AAZ86899.1"/>
    <property type="molecule type" value="Genomic_DNA"/>
</dbReference>
<dbReference type="RefSeq" id="WP_000595482.1">
    <property type="nucleotide sequence ID" value="NC_007384.1"/>
</dbReference>
<dbReference type="SMR" id="Q3Z5R3"/>
<dbReference type="GeneID" id="93777338"/>
<dbReference type="KEGG" id="ssn:SSON_0104"/>
<dbReference type="HOGENOM" id="CLU_046528_1_0_6"/>
<dbReference type="UniPathway" id="UPA00359">
    <property type="reaction ID" value="UER00478"/>
</dbReference>
<dbReference type="Proteomes" id="UP000002529">
    <property type="component" value="Chromosome"/>
</dbReference>
<dbReference type="GO" id="GO:0016020">
    <property type="term" value="C:membrane"/>
    <property type="evidence" value="ECO:0007669"/>
    <property type="project" value="GOC"/>
</dbReference>
<dbReference type="GO" id="GO:0046872">
    <property type="term" value="F:metal ion binding"/>
    <property type="evidence" value="ECO:0007669"/>
    <property type="project" value="UniProtKB-KW"/>
</dbReference>
<dbReference type="GO" id="GO:0103117">
    <property type="term" value="F:UDP-3-O-acyl-N-acetylglucosamine deacetylase activity"/>
    <property type="evidence" value="ECO:0007669"/>
    <property type="project" value="UniProtKB-UniRule"/>
</dbReference>
<dbReference type="GO" id="GO:0009245">
    <property type="term" value="P:lipid A biosynthetic process"/>
    <property type="evidence" value="ECO:0007669"/>
    <property type="project" value="UniProtKB-UniRule"/>
</dbReference>
<dbReference type="FunFam" id="3.30.1700.10:FF:000001">
    <property type="entry name" value="UDP-3-O-acyl-N-acetylglucosamine deacetylase"/>
    <property type="match status" value="1"/>
</dbReference>
<dbReference type="FunFam" id="3.30.230.20:FF:000001">
    <property type="entry name" value="UDP-3-O-acyl-N-acetylglucosamine deacetylase"/>
    <property type="match status" value="1"/>
</dbReference>
<dbReference type="Gene3D" id="3.30.230.20">
    <property type="entry name" value="lpxc deacetylase, domain 1"/>
    <property type="match status" value="1"/>
</dbReference>
<dbReference type="Gene3D" id="3.30.1700.10">
    <property type="entry name" value="lpxc deacetylase, domain 2"/>
    <property type="match status" value="1"/>
</dbReference>
<dbReference type="HAMAP" id="MF_00388">
    <property type="entry name" value="LpxC"/>
    <property type="match status" value="1"/>
</dbReference>
<dbReference type="InterPro" id="IPR020568">
    <property type="entry name" value="Ribosomal_Su5_D2-typ_SF"/>
</dbReference>
<dbReference type="InterPro" id="IPR004463">
    <property type="entry name" value="UDP-acyl_GlcNac_deAcase"/>
</dbReference>
<dbReference type="InterPro" id="IPR011334">
    <property type="entry name" value="UDP-acyl_GlcNac_deAcase_C"/>
</dbReference>
<dbReference type="InterPro" id="IPR015870">
    <property type="entry name" value="UDP-acyl_N-AcGlcN_deAcase_N"/>
</dbReference>
<dbReference type="NCBIfam" id="TIGR00325">
    <property type="entry name" value="lpxC"/>
    <property type="match status" value="1"/>
</dbReference>
<dbReference type="PANTHER" id="PTHR33694">
    <property type="entry name" value="UDP-3-O-ACYL-N-ACETYLGLUCOSAMINE DEACETYLASE 1, MITOCHONDRIAL-RELATED"/>
    <property type="match status" value="1"/>
</dbReference>
<dbReference type="PANTHER" id="PTHR33694:SF1">
    <property type="entry name" value="UDP-3-O-ACYL-N-ACETYLGLUCOSAMINE DEACETYLASE 1, MITOCHONDRIAL-RELATED"/>
    <property type="match status" value="1"/>
</dbReference>
<dbReference type="Pfam" id="PF03331">
    <property type="entry name" value="LpxC"/>
    <property type="match status" value="1"/>
</dbReference>
<dbReference type="SUPFAM" id="SSF54211">
    <property type="entry name" value="Ribosomal protein S5 domain 2-like"/>
    <property type="match status" value="2"/>
</dbReference>
<gene>
    <name evidence="1" type="primary">lpxC</name>
    <name type="ordered locus">SSON_0104</name>
</gene>
<keyword id="KW-0378">Hydrolase</keyword>
<keyword id="KW-0441">Lipid A biosynthesis</keyword>
<keyword id="KW-0444">Lipid biosynthesis</keyword>
<keyword id="KW-0443">Lipid metabolism</keyword>
<keyword id="KW-0479">Metal-binding</keyword>
<keyword id="KW-1185">Reference proteome</keyword>
<keyword id="KW-0862">Zinc</keyword>
<accession>Q3Z5R3</accession>
<name>LPXC_SHISS</name>
<feature type="chain" id="PRO_0000253696" description="UDP-3-O-acyl-N-acetylglucosamine deacetylase">
    <location>
        <begin position="1"/>
        <end position="305"/>
    </location>
</feature>
<feature type="active site" description="Proton donor" evidence="1">
    <location>
        <position position="265"/>
    </location>
</feature>
<feature type="binding site" evidence="1">
    <location>
        <position position="79"/>
    </location>
    <ligand>
        <name>Zn(2+)</name>
        <dbReference type="ChEBI" id="CHEBI:29105"/>
    </ligand>
</feature>
<feature type="binding site" evidence="1">
    <location>
        <position position="238"/>
    </location>
    <ligand>
        <name>Zn(2+)</name>
        <dbReference type="ChEBI" id="CHEBI:29105"/>
    </ligand>
</feature>
<feature type="binding site" evidence="1">
    <location>
        <position position="242"/>
    </location>
    <ligand>
        <name>Zn(2+)</name>
        <dbReference type="ChEBI" id="CHEBI:29105"/>
    </ligand>
</feature>
<organism>
    <name type="scientific">Shigella sonnei (strain Ss046)</name>
    <dbReference type="NCBI Taxonomy" id="300269"/>
    <lineage>
        <taxon>Bacteria</taxon>
        <taxon>Pseudomonadati</taxon>
        <taxon>Pseudomonadota</taxon>
        <taxon>Gammaproteobacteria</taxon>
        <taxon>Enterobacterales</taxon>
        <taxon>Enterobacteriaceae</taxon>
        <taxon>Shigella</taxon>
    </lineage>
</organism>
<sequence length="305" mass="33956">MIKQRTLKRIVQATGVGLHTGKKVTLTLRPAPANTGVIYRRTDLNPPVDFPADAKSVRDTMLCTCLVNEHDVRISTVEHLNAALAGLGIDNIVIEVNAPEIPIMDGSAAPFVYLLLDAGIDELNCAKKFVRIKETVRVEDGDKWAEFKPYNGFSLDFTIDFNHPAIDSSNQRYAMNFSADAFMRQISRARTFGFMRDIEYLQSRGLCLGGSFDCAIVVDDYRVLNEDGLRFEDEFVRHKMLDAIGDLFMCGHNIIGAFTAYKSGHALNNKLLQAVLAKQEAWEYVTFQDDAELPLAFKAPSAVLA</sequence>